<accession>P02712</accession>
<protein>
    <recommendedName>
        <fullName>Acetylcholine receptor subunit beta</fullName>
    </recommendedName>
</protein>
<proteinExistence type="evidence at protein level"/>
<comment type="function">
    <text>After binding acetylcholine, the AChR responds by an extensive change in conformation that affects all subunits and leads to opening of an ion-conducting channel across the plasma membrane.</text>
</comment>
<comment type="catalytic activity">
    <reaction evidence="1">
        <text>K(+)(in) = K(+)(out)</text>
        <dbReference type="Rhea" id="RHEA:29463"/>
        <dbReference type="ChEBI" id="CHEBI:29103"/>
    </reaction>
</comment>
<comment type="catalytic activity">
    <reaction evidence="1">
        <text>Na(+)(in) = Na(+)(out)</text>
        <dbReference type="Rhea" id="RHEA:34963"/>
        <dbReference type="ChEBI" id="CHEBI:29101"/>
    </reaction>
</comment>
<comment type="subunit">
    <text>Pentamer of two alpha chains, and one each of the beta, delta, and gamma chains.</text>
</comment>
<comment type="subcellular location">
    <subcellularLocation>
        <location>Postsynaptic cell membrane</location>
        <topology>Multi-pass membrane protein</topology>
    </subcellularLocation>
    <subcellularLocation>
        <location>Cell membrane</location>
        <topology>Multi-pass membrane protein</topology>
    </subcellularLocation>
</comment>
<comment type="similarity">
    <text evidence="6">Belongs to the ligand-gated ion channel (TC 1.A.9) family. Acetylcholine receptor (TC 1.A.9.1) subfamily. Beta-1/CHRNB1 sub-subfamily.</text>
</comment>
<dbReference type="EMBL" id="J00964">
    <property type="protein sequence ID" value="AAA49274.1"/>
    <property type="molecule type" value="mRNA"/>
</dbReference>
<dbReference type="PIR" id="A93294">
    <property type="entry name" value="ACRYB1"/>
</dbReference>
<dbReference type="PDB" id="1OED">
    <property type="method" value="EM"/>
    <property type="resolution" value="4.00 A"/>
    <property type="chains" value="B=241-490"/>
</dbReference>
<dbReference type="PDB" id="6UWZ">
    <property type="method" value="EM"/>
    <property type="resolution" value="2.69 A"/>
    <property type="chains" value="C=25-493"/>
</dbReference>
<dbReference type="PDB" id="7QKO">
    <property type="method" value="EM"/>
    <property type="resolution" value="2.90 A"/>
    <property type="chains" value="B=25-493"/>
</dbReference>
<dbReference type="PDB" id="7QL5">
    <property type="method" value="EM"/>
    <property type="resolution" value="2.50 A"/>
    <property type="chains" value="B=25-493"/>
</dbReference>
<dbReference type="PDB" id="7QL6">
    <property type="method" value="EM"/>
    <property type="resolution" value="3.23 A"/>
    <property type="chains" value="B=25-493"/>
</dbReference>
<dbReference type="PDB" id="7SMM">
    <property type="method" value="EM"/>
    <property type="resolution" value="2.50 A"/>
    <property type="chains" value="C=25-493"/>
</dbReference>
<dbReference type="PDB" id="7SMQ">
    <property type="method" value="EM"/>
    <property type="resolution" value="2.70 A"/>
    <property type="chains" value="C=25-493"/>
</dbReference>
<dbReference type="PDB" id="7SMR">
    <property type="method" value="EM"/>
    <property type="resolution" value="2.77 A"/>
    <property type="chains" value="C=25-493"/>
</dbReference>
<dbReference type="PDB" id="7SMS">
    <property type="method" value="EM"/>
    <property type="resolution" value="3.18 A"/>
    <property type="chains" value="C=25-493"/>
</dbReference>
<dbReference type="PDB" id="7SMT">
    <property type="method" value="EM"/>
    <property type="resolution" value="2.56 A"/>
    <property type="chains" value="C=25-493"/>
</dbReference>
<dbReference type="PDB" id="7Z14">
    <property type="method" value="EM"/>
    <property type="resolution" value="3.15 A"/>
    <property type="chains" value="B=25-493"/>
</dbReference>
<dbReference type="PDB" id="8ESK">
    <property type="method" value="EM"/>
    <property type="resolution" value="2.90 A"/>
    <property type="chains" value="C=25-493"/>
</dbReference>
<dbReference type="PDB" id="8F2S">
    <property type="method" value="EM"/>
    <property type="resolution" value="2.90 A"/>
    <property type="chains" value="C=25-493"/>
</dbReference>
<dbReference type="PDB" id="8F6Y">
    <property type="method" value="EM"/>
    <property type="resolution" value="2.79 A"/>
    <property type="chains" value="C=25-493"/>
</dbReference>
<dbReference type="PDB" id="8F6Z">
    <property type="method" value="EM"/>
    <property type="resolution" value="2.70 A"/>
    <property type="chains" value="C=25-493"/>
</dbReference>
<dbReference type="PDB" id="8QQM">
    <property type="method" value="EM"/>
    <property type="resolution" value="4.70 A"/>
    <property type="chains" value="C=25-493"/>
</dbReference>
<dbReference type="PDBsum" id="1OED"/>
<dbReference type="PDBsum" id="6UWZ"/>
<dbReference type="PDBsum" id="7QKO"/>
<dbReference type="PDBsum" id="7QL5"/>
<dbReference type="PDBsum" id="7QL6"/>
<dbReference type="PDBsum" id="7SMM"/>
<dbReference type="PDBsum" id="7SMQ"/>
<dbReference type="PDBsum" id="7SMR"/>
<dbReference type="PDBsum" id="7SMS"/>
<dbReference type="PDBsum" id="7SMT"/>
<dbReference type="PDBsum" id="7Z14"/>
<dbReference type="PDBsum" id="8ESK"/>
<dbReference type="PDBsum" id="8F2S"/>
<dbReference type="PDBsum" id="8F6Y"/>
<dbReference type="PDBsum" id="8F6Z"/>
<dbReference type="PDBsum" id="8QQM"/>
<dbReference type="EMDB" id="EMD-1044"/>
<dbReference type="EMDB" id="EMD-14048"/>
<dbReference type="EMDB" id="EMD-14064"/>
<dbReference type="EMDB" id="EMD-14065"/>
<dbReference type="EMDB" id="EMD-14440"/>
<dbReference type="EMDB" id="EMD-18596"/>
<dbReference type="EMDB" id="EMD-20928"/>
<dbReference type="EMDB" id="EMD-25202"/>
<dbReference type="EMDB" id="EMD-25205"/>
<dbReference type="EMDB" id="EMD-25206"/>
<dbReference type="EMDB" id="EMD-25207"/>
<dbReference type="EMDB" id="EMD-25208"/>
<dbReference type="EMDB" id="EMD-28576"/>
<dbReference type="EMDB" id="EMD-28826"/>
<dbReference type="EMDB" id="EMD-28892"/>
<dbReference type="EMDB" id="EMD-28893"/>
<dbReference type="SMR" id="P02712"/>
<dbReference type="ComplexPortal" id="CPX-2187">
    <property type="entry name" value="Acetylcholine receptor, alpha1-beta1-gamma-delta"/>
</dbReference>
<dbReference type="IntAct" id="P02712">
    <property type="interactions" value="2"/>
</dbReference>
<dbReference type="BindingDB" id="P02712"/>
<dbReference type="ChEMBL" id="CHEMBL2096975"/>
<dbReference type="DrugCentral" id="P02712"/>
<dbReference type="TCDB" id="1.A.9.1.9">
    <property type="family name" value="the neurotransmitter receptor, cys loop, ligand-gated ion channel (lic) family"/>
</dbReference>
<dbReference type="GlyConnect" id="7">
    <property type="glycosylation" value="35 N-Linked glycans"/>
</dbReference>
<dbReference type="GlyCosmos" id="P02712">
    <property type="glycosylation" value="1 site, 66 glycans"/>
</dbReference>
<dbReference type="iPTMnet" id="P02712"/>
<dbReference type="SwissPalm" id="P02712"/>
<dbReference type="EvolutionaryTrace" id="P02712"/>
<dbReference type="GO" id="GO:0045211">
    <property type="term" value="C:postsynaptic membrane"/>
    <property type="evidence" value="ECO:0007669"/>
    <property type="project" value="UniProtKB-SubCell"/>
</dbReference>
<dbReference type="GO" id="GO:0022848">
    <property type="term" value="F:acetylcholine-gated monoatomic cation-selective channel activity"/>
    <property type="evidence" value="ECO:0007669"/>
    <property type="project" value="InterPro"/>
</dbReference>
<dbReference type="GO" id="GO:0004888">
    <property type="term" value="F:transmembrane signaling receptor activity"/>
    <property type="evidence" value="ECO:0007669"/>
    <property type="project" value="InterPro"/>
</dbReference>
<dbReference type="CDD" id="cd19064">
    <property type="entry name" value="LGIC_TM_nAChR"/>
    <property type="match status" value="1"/>
</dbReference>
<dbReference type="FunFam" id="2.70.170.10:FF:000012">
    <property type="entry name" value="Nicotinic acetylcholine receptor subunit gamma"/>
    <property type="match status" value="1"/>
</dbReference>
<dbReference type="Gene3D" id="2.70.170.10">
    <property type="entry name" value="Neurotransmitter-gated ion-channel ligand-binding domain"/>
    <property type="match status" value="1"/>
</dbReference>
<dbReference type="Gene3D" id="1.20.58.390">
    <property type="entry name" value="Neurotransmitter-gated ion-channel transmembrane domain"/>
    <property type="match status" value="2"/>
</dbReference>
<dbReference type="InterPro" id="IPR006202">
    <property type="entry name" value="Neur_chan_lig-bd"/>
</dbReference>
<dbReference type="InterPro" id="IPR036734">
    <property type="entry name" value="Neur_chan_lig-bd_sf"/>
</dbReference>
<dbReference type="InterPro" id="IPR006201">
    <property type="entry name" value="Neur_channel"/>
</dbReference>
<dbReference type="InterPro" id="IPR036719">
    <property type="entry name" value="Neuro-gated_channel_TM_sf"/>
</dbReference>
<dbReference type="InterPro" id="IPR038050">
    <property type="entry name" value="Neuro_actylchol_rec"/>
</dbReference>
<dbReference type="InterPro" id="IPR006029">
    <property type="entry name" value="Neurotrans-gated_channel_TM"/>
</dbReference>
<dbReference type="InterPro" id="IPR018000">
    <property type="entry name" value="Neurotransmitter_ion_chnl_CS"/>
</dbReference>
<dbReference type="InterPro" id="IPR002394">
    <property type="entry name" value="Nicotinic_acetylcholine_rcpt"/>
</dbReference>
<dbReference type="NCBIfam" id="TIGR00860">
    <property type="entry name" value="LIC"/>
    <property type="match status" value="1"/>
</dbReference>
<dbReference type="PANTHER" id="PTHR18945">
    <property type="entry name" value="NEUROTRANSMITTER GATED ION CHANNEL"/>
    <property type="match status" value="1"/>
</dbReference>
<dbReference type="Pfam" id="PF02931">
    <property type="entry name" value="Neur_chan_LBD"/>
    <property type="match status" value="1"/>
</dbReference>
<dbReference type="Pfam" id="PF02932">
    <property type="entry name" value="Neur_chan_memb"/>
    <property type="match status" value="1"/>
</dbReference>
<dbReference type="PRINTS" id="PR00254">
    <property type="entry name" value="NICOTINICR"/>
</dbReference>
<dbReference type="PRINTS" id="PR00252">
    <property type="entry name" value="NRIONCHANNEL"/>
</dbReference>
<dbReference type="SUPFAM" id="SSF90112">
    <property type="entry name" value="Neurotransmitter-gated ion-channel transmembrane pore"/>
    <property type="match status" value="1"/>
</dbReference>
<dbReference type="SUPFAM" id="SSF63712">
    <property type="entry name" value="Nicotinic receptor ligand binding domain-like"/>
    <property type="match status" value="1"/>
</dbReference>
<dbReference type="PROSITE" id="PS00236">
    <property type="entry name" value="NEUROTR_ION_CHANNEL"/>
    <property type="match status" value="1"/>
</dbReference>
<organism>
    <name type="scientific">Tetronarce californica</name>
    <name type="common">Pacific electric ray</name>
    <name type="synonym">Torpedo californica</name>
    <dbReference type="NCBI Taxonomy" id="7787"/>
    <lineage>
        <taxon>Eukaryota</taxon>
        <taxon>Metazoa</taxon>
        <taxon>Chordata</taxon>
        <taxon>Craniata</taxon>
        <taxon>Vertebrata</taxon>
        <taxon>Chondrichthyes</taxon>
        <taxon>Elasmobranchii</taxon>
        <taxon>Batoidea</taxon>
        <taxon>Torpediniformes</taxon>
        <taxon>Torpedinidae</taxon>
        <taxon>Tetronarce</taxon>
    </lineage>
</organism>
<sequence length="493" mass="56156">MENVRRMALGLVVMMALALSGVGASVMEDTLLSVLFETYNPKVRPAQTVGDKVTVRVGLTLTNLLILNEKIEEMTTNVFLNLAWTDYRLQWDPAAYEGIKDLRIPSSDVWQPDIVLMNNNDGSFEITLHVNVLVQHTGAVSWQPSAIYRSSCTIKVMYFPFDWQNCTMVFKSYTYDTSEVTLQHALDAKGEREVKEIVINKDAFTENGQWSIEHKPSRKNWRSDDPSYEDVTFYLIIQRKPLFYIVYTIIPCILISILAILVFYLPPDAGEKMSLSISALLAVTVFLLLLADKVPETSLSVPIIIRYLMFIMILVAFSVILSVVVLNLHHRSPNTHTMPNWIRQIFIETLPPFLWIQRPVTTPSPDSKPTIISRANDEYFIRKPAGDFVCPVDNARVAVQPERLFSEMKWHLNGLTQPVTLPQDLKEAVEAIKYIAEQLESASEFDDLKKDWQYVAMVADRLFLYVFFVICSIGTFSIFLDASHNVPPDNPFA</sequence>
<gene>
    <name type="primary">CHRNB1</name>
</gene>
<name>ACHB_TETCF</name>
<keyword id="KW-0002">3D-structure</keyword>
<keyword id="KW-1003">Cell membrane</keyword>
<keyword id="KW-0903">Direct protein sequencing</keyword>
<keyword id="KW-1015">Disulfide bond</keyword>
<keyword id="KW-0325">Glycoprotein</keyword>
<keyword id="KW-0407">Ion channel</keyword>
<keyword id="KW-0406">Ion transport</keyword>
<keyword id="KW-1071">Ligand-gated ion channel</keyword>
<keyword id="KW-0472">Membrane</keyword>
<keyword id="KW-0597">Phosphoprotein</keyword>
<keyword id="KW-0628">Postsynaptic cell membrane</keyword>
<keyword id="KW-0675">Receptor</keyword>
<keyword id="KW-0732">Signal</keyword>
<keyword id="KW-0770">Synapse</keyword>
<keyword id="KW-0812">Transmembrane</keyword>
<keyword id="KW-1133">Transmembrane helix</keyword>
<keyword id="KW-0813">Transport</keyword>
<feature type="signal peptide" evidence="5">
    <location>
        <begin position="1"/>
        <end position="24"/>
    </location>
</feature>
<feature type="chain" id="PRO_0000000319" description="Acetylcholine receptor subunit beta">
    <location>
        <begin position="25"/>
        <end position="493"/>
    </location>
</feature>
<feature type="topological domain" description="Extracellular" evidence="2">
    <location>
        <begin position="25"/>
        <end position="240"/>
    </location>
</feature>
<feature type="transmembrane region" description="Helical" evidence="2">
    <location>
        <begin position="241"/>
        <end position="265"/>
    </location>
</feature>
<feature type="transmembrane region" description="Helical" evidence="2">
    <location>
        <begin position="273"/>
        <end position="291"/>
    </location>
</feature>
<feature type="transmembrane region" description="Helical" evidence="2">
    <location>
        <begin position="307"/>
        <end position="328"/>
    </location>
</feature>
<feature type="topological domain" description="Cytoplasmic" evidence="2">
    <location>
        <begin position="329"/>
        <end position="461"/>
    </location>
</feature>
<feature type="transmembrane region" description="Helical" evidence="2">
    <location>
        <begin position="462"/>
        <end position="480"/>
    </location>
</feature>
<feature type="modified residue" description="Phosphotyrosine; by Tyr-kinases" evidence="3">
    <location>
        <position position="379"/>
    </location>
</feature>
<feature type="glycosylation site" description="N-linked (GlcNAc...) asparagine" evidence="4">
    <location>
        <position position="165"/>
    </location>
</feature>
<feature type="disulfide bond" evidence="4">
    <location>
        <begin position="152"/>
        <end position="166"/>
    </location>
</feature>
<feature type="sequence variant" description="In a second clone.">
    <original>N</original>
    <variation>D</variation>
    <location>
        <position position="3"/>
    </location>
</feature>
<feature type="sequence variant" description="In a second clone.">
    <original>L</original>
    <variation>V</variation>
    <location>
        <position position="11"/>
    </location>
</feature>
<feature type="sequence conflict" description="In Ref. 2; AA sequence." evidence="6" ref="2">
    <original>T</original>
    <variation>R</variation>
    <location>
        <position position="75"/>
    </location>
</feature>
<feature type="helix" evidence="9">
    <location>
        <begin position="27"/>
        <end position="35"/>
    </location>
</feature>
<feature type="strand" evidence="9">
    <location>
        <begin position="53"/>
        <end position="68"/>
    </location>
</feature>
<feature type="turn" evidence="9">
    <location>
        <begin position="69"/>
        <end position="72"/>
    </location>
</feature>
<feature type="strand" evidence="9">
    <location>
        <begin position="73"/>
        <end position="85"/>
    </location>
</feature>
<feature type="helix" evidence="9">
    <location>
        <begin position="93"/>
        <end position="95"/>
    </location>
</feature>
<feature type="turn" evidence="9">
    <location>
        <begin position="96"/>
        <end position="98"/>
    </location>
</feature>
<feature type="strand" evidence="9">
    <location>
        <begin position="101"/>
        <end position="104"/>
    </location>
</feature>
<feature type="helix" evidence="9">
    <location>
        <begin position="106"/>
        <end position="108"/>
    </location>
</feature>
<feature type="strand" evidence="9">
    <location>
        <begin position="114"/>
        <end position="116"/>
    </location>
</feature>
<feature type="strand" evidence="9">
    <location>
        <begin position="119"/>
        <end position="122"/>
    </location>
</feature>
<feature type="strand" evidence="9">
    <location>
        <begin position="132"/>
        <end position="135"/>
    </location>
</feature>
<feature type="strand" evidence="9">
    <location>
        <begin position="138"/>
        <end position="142"/>
    </location>
</feature>
<feature type="strand" evidence="9">
    <location>
        <begin position="145"/>
        <end position="151"/>
    </location>
</feature>
<feature type="turn" evidence="9">
    <location>
        <begin position="157"/>
        <end position="160"/>
    </location>
</feature>
<feature type="strand" evidence="9">
    <location>
        <begin position="163"/>
        <end position="174"/>
    </location>
</feature>
<feature type="turn" evidence="9">
    <location>
        <begin position="177"/>
        <end position="179"/>
    </location>
</feature>
<feature type="strand" evidence="9">
    <location>
        <begin position="180"/>
        <end position="184"/>
    </location>
</feature>
<feature type="strand" evidence="10">
    <location>
        <begin position="191"/>
        <end position="194"/>
    </location>
</feature>
<feature type="strand" evidence="7">
    <location>
        <begin position="198"/>
        <end position="200"/>
    </location>
</feature>
<feature type="helix" evidence="9">
    <location>
        <begin position="201"/>
        <end position="203"/>
    </location>
</feature>
<feature type="strand" evidence="9">
    <location>
        <begin position="208"/>
        <end position="214"/>
    </location>
</feature>
<feature type="strand" evidence="9">
    <location>
        <begin position="216"/>
        <end position="221"/>
    </location>
</feature>
<feature type="strand" evidence="8">
    <location>
        <begin position="223"/>
        <end position="227"/>
    </location>
</feature>
<feature type="strand" evidence="9">
    <location>
        <begin position="229"/>
        <end position="239"/>
    </location>
</feature>
<feature type="turn" evidence="9">
    <location>
        <begin position="242"/>
        <end position="248"/>
    </location>
</feature>
<feature type="helix" evidence="9">
    <location>
        <begin position="249"/>
        <end position="261"/>
    </location>
</feature>
<feature type="helix" evidence="9">
    <location>
        <begin position="262"/>
        <end position="264"/>
    </location>
</feature>
<feature type="helix" evidence="10">
    <location>
        <begin position="267"/>
        <end position="269"/>
    </location>
</feature>
<feature type="helix" evidence="9">
    <location>
        <begin position="272"/>
        <end position="290"/>
    </location>
</feature>
<feature type="turn" evidence="9">
    <location>
        <begin position="291"/>
        <end position="293"/>
    </location>
</feature>
<feature type="helix" evidence="9">
    <location>
        <begin position="303"/>
        <end position="329"/>
    </location>
</feature>
<feature type="turn" evidence="9">
    <location>
        <begin position="333"/>
        <end position="335"/>
    </location>
</feature>
<feature type="helix" evidence="9">
    <location>
        <begin position="340"/>
        <end position="354"/>
    </location>
</feature>
<feature type="helix" evidence="9">
    <location>
        <begin position="430"/>
        <end position="482"/>
    </location>
</feature>
<reference key="1">
    <citation type="journal article" date="1983" name="Nature">
        <title>Primary structures of beta- and delta-subunit precursors of Torpedo californica acetylcholine receptor deduced from cDNA sequences.</title>
        <authorList>
            <person name="Noda M."/>
            <person name="Takahashi H."/>
            <person name="Tanabe T."/>
            <person name="Toyosato M."/>
            <person name="Kikyotani S."/>
            <person name="Hirose T."/>
            <person name="Asai M."/>
            <person name="Takashima H."/>
            <person name="Inayama S."/>
            <person name="Miyata T."/>
            <person name="Numa S."/>
        </authorList>
    </citation>
    <scope>NUCLEOTIDE SEQUENCE [MRNA]</scope>
</reference>
<reference key="2">
    <citation type="journal article" date="1980" name="Science">
        <title>Acetylcholine receptor: complex of homologous subunits.</title>
        <authorList>
            <person name="Raftery M.A."/>
            <person name="Hunkapiller M.W."/>
            <person name="Strader C.D."/>
            <person name="Hood L.E."/>
        </authorList>
    </citation>
    <scope>PROTEIN SEQUENCE OF 25-78</scope>
</reference>
<reference key="3">
    <citation type="journal article" date="1989" name="Biochemistry">
        <title>Assessment of the number of free cysteines and isolation and identification of cystine-containing peptides from acetylcholine receptor.</title>
        <authorList>
            <person name="Kellaris K.V."/>
            <person name="Ware D.K."/>
            <person name="Smith S."/>
            <person name="Kyte J."/>
        </authorList>
    </citation>
    <scope>PROTEIN SEQUENCE OF 126-147</scope>
    <scope>GLYCOSYLATION AT ASN-165</scope>
    <scope>DISULFIDE BOND</scope>
</reference>
<reference key="4">
    <citation type="journal article" date="1991" name="J. Biol. Chem.">
        <title>Determination of the tyrosine phosphorylation sites of the nicotinic acetylcholine receptor.</title>
        <authorList>
            <person name="Wagner K."/>
            <person name="Edson K."/>
            <person name="Heginbotham L."/>
            <person name="Post M."/>
            <person name="Huganir R.L."/>
            <person name="Czernik A.J."/>
        </authorList>
    </citation>
    <scope>PHOSPHORYLATION AT TYR-379</scope>
</reference>
<evidence type="ECO:0000250" key="1">
    <source>
        <dbReference type="UniProtKB" id="P04758"/>
    </source>
</evidence>
<evidence type="ECO:0000255" key="2"/>
<evidence type="ECO:0000269" key="3">
    <source>
    </source>
</evidence>
<evidence type="ECO:0000269" key="4">
    <source>
    </source>
</evidence>
<evidence type="ECO:0000269" key="5">
    <source>
    </source>
</evidence>
<evidence type="ECO:0000305" key="6"/>
<evidence type="ECO:0007829" key="7">
    <source>
        <dbReference type="PDB" id="6UWZ"/>
    </source>
</evidence>
<evidence type="ECO:0007829" key="8">
    <source>
        <dbReference type="PDB" id="7QKO"/>
    </source>
</evidence>
<evidence type="ECO:0007829" key="9">
    <source>
        <dbReference type="PDB" id="7QL5"/>
    </source>
</evidence>
<evidence type="ECO:0007829" key="10">
    <source>
        <dbReference type="PDB" id="7SMM"/>
    </source>
</evidence>